<geneLocation type="chloroplast"/>
<organism>
    <name type="scientific">Arabidopsis thaliana</name>
    <name type="common">Mouse-ear cress</name>
    <dbReference type="NCBI Taxonomy" id="3702"/>
    <lineage>
        <taxon>Eukaryota</taxon>
        <taxon>Viridiplantae</taxon>
        <taxon>Streptophyta</taxon>
        <taxon>Embryophyta</taxon>
        <taxon>Tracheophyta</taxon>
        <taxon>Spermatophyta</taxon>
        <taxon>Magnoliopsida</taxon>
        <taxon>eudicotyledons</taxon>
        <taxon>Gunneridae</taxon>
        <taxon>Pentapetalae</taxon>
        <taxon>rosids</taxon>
        <taxon>malvids</taxon>
        <taxon>Brassicales</taxon>
        <taxon>Brassicaceae</taxon>
        <taxon>Camelineae</taxon>
        <taxon>Arabidopsis</taxon>
    </lineage>
</organism>
<comment type="subunit">
    <text evidence="1">Part of the 50S ribosomal subunit.</text>
</comment>
<comment type="subcellular location">
    <subcellularLocation>
        <location>Plastid</location>
        <location>Chloroplast</location>
    </subcellularLocation>
</comment>
<comment type="similarity">
    <text evidence="4">Belongs to the universal ribosomal protein uL2 family.</text>
</comment>
<name>RK2_ARATH</name>
<protein>
    <recommendedName>
        <fullName evidence="3">Large ribosomal subunit protein uL2cz/uL2cy</fullName>
    </recommendedName>
    <alternativeName>
        <fullName>50S ribosomal protein L2, chloroplastic</fullName>
    </alternativeName>
</protein>
<reference key="1">
    <citation type="journal article" date="1999" name="DNA Res.">
        <title>Complete structure of the chloroplast genome of Arabidopsis thaliana.</title>
        <authorList>
            <person name="Sato S."/>
            <person name="Nakamura Y."/>
            <person name="Kaneko T."/>
            <person name="Asamizu E."/>
            <person name="Tabata S."/>
        </authorList>
    </citation>
    <scope>NUCLEOTIDE SEQUENCE [LARGE SCALE GENOMIC DNA]</scope>
    <source>
        <strain>cv. Columbia</strain>
    </source>
</reference>
<reference key="2">
    <citation type="submission" date="2000-02" db="EMBL/GenBank/DDBJ databases">
        <title>Long branches in the seed plants and the root of the angiosperms.</title>
        <authorList>
            <person name="Graham S.W."/>
            <person name="Reeves P.A."/>
            <person name="Burns A."/>
            <person name="Olmstead R.G."/>
        </authorList>
    </citation>
    <scope>NUCLEOTIDE SEQUENCE [GENOMIC DNA] OF 47-240</scope>
</reference>
<reference key="3">
    <citation type="journal article" date="2023" name="Plant Cell">
        <title>An updated nomenclature for plant ribosomal protein genes.</title>
        <authorList>
            <person name="Scarpin M.R."/>
            <person name="Busche M."/>
            <person name="Martinez R.E."/>
            <person name="Harper L.C."/>
            <person name="Reiser L."/>
            <person name="Szakonyi D."/>
            <person name="Merchante C."/>
            <person name="Lan T."/>
            <person name="Xiong W."/>
            <person name="Mo B."/>
            <person name="Tang G."/>
            <person name="Chen X."/>
            <person name="Bailey-Serres J."/>
            <person name="Browning K.S."/>
            <person name="Brunkard J.O."/>
        </authorList>
    </citation>
    <scope>NOMENCLATURE</scope>
</reference>
<proteinExistence type="inferred from homology"/>
<evidence type="ECO:0000250" key="1"/>
<evidence type="ECO:0000256" key="2">
    <source>
        <dbReference type="SAM" id="MobiDB-lite"/>
    </source>
</evidence>
<evidence type="ECO:0000303" key="3">
    <source>
    </source>
</evidence>
<evidence type="ECO:0000305" key="4"/>
<keyword id="KW-0150">Chloroplast</keyword>
<keyword id="KW-0934">Plastid</keyword>
<keyword id="KW-1185">Reference proteome</keyword>
<keyword id="KW-0687">Ribonucleoprotein</keyword>
<keyword id="KW-0689">Ribosomal protein</keyword>
<accession>P56791</accession>
<accession>Q8HRX3</accession>
<sequence length="274" mass="29865">MAIHLYKTSTPSTRNGAVDSQVKSNPRNNLICGQHHCGKGRNARGIITARHRGGGHKRLYRKIDFRRNAKDIYGRIVTIEYDPNRNAYICLIHYGDGEKRYILHPRGAIIGDTIVSGTEVPIKMGNALPLTDMPLGTAIHNIEITLGRGGQLARAAGAVAKLIAKEGKSATLKLPSGEVRLISKNCSATVGQVGNVGVNQKSLGRAGSKCWLGKRPVVRGVVMNPVDHPHGGGEGRAPIGRKKPVTPWGYPALGRRTRKRKKYSETLILRRRSK</sequence>
<dbReference type="EMBL" id="AP000423">
    <property type="protein sequence ID" value="BAA84426.1"/>
    <property type="molecule type" value="Genomic_DNA"/>
</dbReference>
<dbReference type="EMBL" id="AP000423">
    <property type="protein sequence ID" value="BAA84451.1"/>
    <property type="molecule type" value="Genomic_DNA"/>
</dbReference>
<dbReference type="EMBL" id="AY007488">
    <property type="protein sequence ID" value="AAG23850.1"/>
    <property type="molecule type" value="Genomic_DNA"/>
</dbReference>
<dbReference type="SMR" id="P56791"/>
<dbReference type="BioGRID" id="29997">
    <property type="interactions" value="66"/>
</dbReference>
<dbReference type="FunCoup" id="P56791">
    <property type="interactions" value="976"/>
</dbReference>
<dbReference type="STRING" id="3702.P56791"/>
<dbReference type="PaxDb" id="3702-ATCG00830.1"/>
<dbReference type="ProteomicsDB" id="234708"/>
<dbReference type="EnsemblPlants" id="ATCG00830.1">
    <property type="protein sequence ID" value="ATCG00830.1"/>
    <property type="gene ID" value="ATCG00830"/>
</dbReference>
<dbReference type="EnsemblPlants" id="ATCG01310.1">
    <property type="protein sequence ID" value="ATCG01310.1"/>
    <property type="gene ID" value="ATCG01310"/>
</dbReference>
<dbReference type="Gramene" id="ATCG00830.1">
    <property type="protein sequence ID" value="ATCG00830.1"/>
    <property type="gene ID" value="ATCG00830"/>
</dbReference>
<dbReference type="Gramene" id="ATCG01310.1">
    <property type="protein sequence ID" value="ATCG01310.1"/>
    <property type="gene ID" value="ATCG01310"/>
</dbReference>
<dbReference type="KEGG" id="ath:ArthCp064"/>
<dbReference type="KEGG" id="ath:ArthCp085"/>
<dbReference type="Araport" id="ATCG00830"/>
<dbReference type="Araport" id="ATCG01310"/>
<dbReference type="TAIR" id="ATCG00830">
    <property type="gene designation" value="RPL2.1"/>
</dbReference>
<dbReference type="TAIR" id="ATCG01310">
    <property type="gene designation" value="RPL2.2"/>
</dbReference>
<dbReference type="eggNOG" id="KOG0438">
    <property type="taxonomic scope" value="Eukaryota"/>
</dbReference>
<dbReference type="HOGENOM" id="CLU_036235_2_1_1"/>
<dbReference type="InParanoid" id="P56791"/>
<dbReference type="OMA" id="NQCWATI"/>
<dbReference type="PRO" id="PR:P56791"/>
<dbReference type="Proteomes" id="UP000006548">
    <property type="component" value="Chloroplast Pltd"/>
</dbReference>
<dbReference type="ExpressionAtlas" id="P56791">
    <property type="expression patterns" value="baseline and differential"/>
</dbReference>
<dbReference type="GO" id="GO:0009507">
    <property type="term" value="C:chloroplast"/>
    <property type="evidence" value="ECO:0007005"/>
    <property type="project" value="TAIR"/>
</dbReference>
<dbReference type="GO" id="GO:0009941">
    <property type="term" value="C:chloroplast envelope"/>
    <property type="evidence" value="ECO:0007005"/>
    <property type="project" value="TAIR"/>
</dbReference>
<dbReference type="GO" id="GO:0009570">
    <property type="term" value="C:chloroplast stroma"/>
    <property type="evidence" value="ECO:0007005"/>
    <property type="project" value="TAIR"/>
</dbReference>
<dbReference type="GO" id="GO:0015934">
    <property type="term" value="C:large ribosomal subunit"/>
    <property type="evidence" value="ECO:0007669"/>
    <property type="project" value="InterPro"/>
</dbReference>
<dbReference type="GO" id="GO:0009536">
    <property type="term" value="C:plastid"/>
    <property type="evidence" value="ECO:0007005"/>
    <property type="project" value="TAIR"/>
</dbReference>
<dbReference type="GO" id="GO:0003729">
    <property type="term" value="F:mRNA binding"/>
    <property type="evidence" value="ECO:0000314"/>
    <property type="project" value="TAIR"/>
</dbReference>
<dbReference type="GO" id="GO:0019843">
    <property type="term" value="F:rRNA binding"/>
    <property type="evidence" value="ECO:0007669"/>
    <property type="project" value="UniProtKB-UniRule"/>
</dbReference>
<dbReference type="GO" id="GO:0003735">
    <property type="term" value="F:structural constituent of ribosome"/>
    <property type="evidence" value="ECO:0007669"/>
    <property type="project" value="InterPro"/>
</dbReference>
<dbReference type="GO" id="GO:0016740">
    <property type="term" value="F:transferase activity"/>
    <property type="evidence" value="ECO:0007669"/>
    <property type="project" value="InterPro"/>
</dbReference>
<dbReference type="GO" id="GO:0006412">
    <property type="term" value="P:translation"/>
    <property type="evidence" value="ECO:0007669"/>
    <property type="project" value="UniProtKB-UniRule"/>
</dbReference>
<dbReference type="FunFam" id="4.10.950.10:FF:000001">
    <property type="entry name" value="50S ribosomal protein L2"/>
    <property type="match status" value="1"/>
</dbReference>
<dbReference type="FunFam" id="2.30.30.30:FF:000008">
    <property type="entry name" value="50S ribosomal protein L2, chloroplastic"/>
    <property type="match status" value="1"/>
</dbReference>
<dbReference type="FunFam" id="2.40.50.140:FF:000029">
    <property type="entry name" value="50S ribosomal protein L2, chloroplastic"/>
    <property type="match status" value="1"/>
</dbReference>
<dbReference type="Gene3D" id="2.30.30.30">
    <property type="match status" value="1"/>
</dbReference>
<dbReference type="Gene3D" id="2.40.50.140">
    <property type="entry name" value="Nucleic acid-binding proteins"/>
    <property type="match status" value="1"/>
</dbReference>
<dbReference type="Gene3D" id="4.10.950.10">
    <property type="entry name" value="Ribosomal protein L2, domain 3"/>
    <property type="match status" value="1"/>
</dbReference>
<dbReference type="HAMAP" id="MF_01320_B">
    <property type="entry name" value="Ribosomal_uL2_B"/>
    <property type="match status" value="1"/>
</dbReference>
<dbReference type="InterPro" id="IPR012340">
    <property type="entry name" value="NA-bd_OB-fold"/>
</dbReference>
<dbReference type="InterPro" id="IPR014722">
    <property type="entry name" value="Rib_uL2_dom2"/>
</dbReference>
<dbReference type="InterPro" id="IPR002171">
    <property type="entry name" value="Ribosomal_uL2"/>
</dbReference>
<dbReference type="InterPro" id="IPR005880">
    <property type="entry name" value="Ribosomal_uL2_bac/org-type"/>
</dbReference>
<dbReference type="InterPro" id="IPR022669">
    <property type="entry name" value="Ribosomal_uL2_C"/>
</dbReference>
<dbReference type="InterPro" id="IPR022671">
    <property type="entry name" value="Ribosomal_uL2_CS"/>
</dbReference>
<dbReference type="InterPro" id="IPR014726">
    <property type="entry name" value="Ribosomal_uL2_dom3"/>
</dbReference>
<dbReference type="InterPro" id="IPR022666">
    <property type="entry name" value="Ribosomal_uL2_RNA-bd_dom"/>
</dbReference>
<dbReference type="InterPro" id="IPR008991">
    <property type="entry name" value="Translation_prot_SH3-like_sf"/>
</dbReference>
<dbReference type="NCBIfam" id="TIGR01171">
    <property type="entry name" value="rplB_bact"/>
    <property type="match status" value="1"/>
</dbReference>
<dbReference type="PANTHER" id="PTHR13691:SF5">
    <property type="entry name" value="LARGE RIBOSOMAL SUBUNIT PROTEIN UL2M"/>
    <property type="match status" value="1"/>
</dbReference>
<dbReference type="PANTHER" id="PTHR13691">
    <property type="entry name" value="RIBOSOMAL PROTEIN L2"/>
    <property type="match status" value="1"/>
</dbReference>
<dbReference type="Pfam" id="PF00181">
    <property type="entry name" value="Ribosomal_L2"/>
    <property type="match status" value="1"/>
</dbReference>
<dbReference type="Pfam" id="PF03947">
    <property type="entry name" value="Ribosomal_L2_C"/>
    <property type="match status" value="1"/>
</dbReference>
<dbReference type="PIRSF" id="PIRSF002158">
    <property type="entry name" value="Ribosomal_L2"/>
    <property type="match status" value="1"/>
</dbReference>
<dbReference type="SMART" id="SM01383">
    <property type="entry name" value="Ribosomal_L2"/>
    <property type="match status" value="1"/>
</dbReference>
<dbReference type="SMART" id="SM01382">
    <property type="entry name" value="Ribosomal_L2_C"/>
    <property type="match status" value="1"/>
</dbReference>
<dbReference type="SUPFAM" id="SSF50249">
    <property type="entry name" value="Nucleic acid-binding proteins"/>
    <property type="match status" value="1"/>
</dbReference>
<dbReference type="SUPFAM" id="SSF50104">
    <property type="entry name" value="Translation proteins SH3-like domain"/>
    <property type="match status" value="1"/>
</dbReference>
<dbReference type="PROSITE" id="PS00467">
    <property type="entry name" value="RIBOSOMAL_L2"/>
    <property type="match status" value="1"/>
</dbReference>
<feature type="chain" id="PRO_0000129664" description="Large ribosomal subunit protein uL2cz/uL2cy">
    <location>
        <begin position="1"/>
        <end position="274"/>
    </location>
</feature>
<feature type="region of interest" description="Disordered" evidence="2">
    <location>
        <begin position="1"/>
        <end position="21"/>
    </location>
</feature>
<feature type="region of interest" description="Disordered" evidence="2">
    <location>
        <begin position="225"/>
        <end position="274"/>
    </location>
</feature>
<gene>
    <name type="primary">rpl2-A</name>
    <name type="synonym">rpl2-1</name>
    <name type="ordered locus">AtCg00830</name>
</gene>
<gene>
    <name type="primary">rpl2-B</name>
    <name type="synonym">rpl2-2</name>
    <name type="ordered locus">AtCg01310</name>
</gene>